<protein>
    <recommendedName>
        <fullName evidence="1">Vacuolar ATPase assembly integral membrane protein VMA21 homolog</fullName>
    </recommendedName>
</protein>
<gene>
    <name evidence="3" type="ORF">R07E5.19</name>
</gene>
<dbReference type="EMBL" id="Z32683">
    <property type="protein sequence ID" value="CAN86606.1"/>
    <property type="molecule type" value="Genomic_DNA"/>
</dbReference>
<dbReference type="RefSeq" id="NP_001370233.1">
    <property type="nucleotide sequence ID" value="NM_001384073.2"/>
</dbReference>
<dbReference type="RefSeq" id="NP_497897.1">
    <property type="nucleotide sequence ID" value="NM_065496.3"/>
</dbReference>
<dbReference type="BioGRID" id="56678">
    <property type="interactions" value="8"/>
</dbReference>
<dbReference type="FunCoup" id="A5JYQ9">
    <property type="interactions" value="2331"/>
</dbReference>
<dbReference type="STRING" id="6239.R07E5.19.1"/>
<dbReference type="PeptideAtlas" id="A5JYQ9"/>
<dbReference type="EnsemblMetazoa" id="R07E5.19.1">
    <property type="protein sequence ID" value="R07E5.19.1"/>
    <property type="gene ID" value="WBGene00303105"/>
</dbReference>
<dbReference type="GeneID" id="36805030"/>
<dbReference type="UCSC" id="R07E5.10a">
    <property type="organism name" value="c. elegans"/>
</dbReference>
<dbReference type="AGR" id="WB:WBGene00303105"/>
<dbReference type="WormBase" id="R07E5.19">
    <property type="protein sequence ID" value="CE03534"/>
    <property type="gene ID" value="WBGene00303105"/>
</dbReference>
<dbReference type="GeneTree" id="ENSGT00390000017980"/>
<dbReference type="HOGENOM" id="CLU_143588_1_0_1"/>
<dbReference type="InParanoid" id="A5JYQ9"/>
<dbReference type="OrthoDB" id="160405at2759"/>
<dbReference type="PRO" id="PR:A5JYQ9"/>
<dbReference type="Proteomes" id="UP000001940">
    <property type="component" value="Chromosome III"/>
</dbReference>
<dbReference type="Bgee" id="WBGene00303105">
    <property type="expression patterns" value="Expressed in pharyngeal muscle cell (C elegans) and 3 other cell types or tissues"/>
</dbReference>
<dbReference type="GO" id="GO:0005789">
    <property type="term" value="C:endoplasmic reticulum membrane"/>
    <property type="evidence" value="ECO:0007669"/>
    <property type="project" value="UniProtKB-SubCell"/>
</dbReference>
<dbReference type="GO" id="GO:0033116">
    <property type="term" value="C:endoplasmic reticulum-Golgi intermediate compartment membrane"/>
    <property type="evidence" value="ECO:0007669"/>
    <property type="project" value="UniProtKB-SubCell"/>
</dbReference>
<dbReference type="GO" id="GO:0012507">
    <property type="term" value="C:ER to Golgi transport vesicle membrane"/>
    <property type="evidence" value="ECO:0007669"/>
    <property type="project" value="UniProtKB-SubCell"/>
</dbReference>
<dbReference type="GO" id="GO:0070072">
    <property type="term" value="P:vacuolar proton-transporting V-type ATPase complex assembly"/>
    <property type="evidence" value="ECO:0007669"/>
    <property type="project" value="UniProtKB-UniRule"/>
</dbReference>
<dbReference type="HAMAP" id="MF_03058">
    <property type="entry name" value="VMA21"/>
    <property type="match status" value="1"/>
</dbReference>
<dbReference type="InterPro" id="IPR019013">
    <property type="entry name" value="Vma21"/>
</dbReference>
<dbReference type="PANTHER" id="PTHR31792">
    <property type="entry name" value="VACUOLAR ATPASE ASSEMBLY INTEGRAL MEMBRANE PROTEIN VMA21"/>
    <property type="match status" value="1"/>
</dbReference>
<dbReference type="PANTHER" id="PTHR31792:SF3">
    <property type="entry name" value="VACUOLAR ATPASE ASSEMBLY INTEGRAL MEMBRANE PROTEIN VMA21"/>
    <property type="match status" value="1"/>
</dbReference>
<dbReference type="Pfam" id="PF09446">
    <property type="entry name" value="VMA21"/>
    <property type="match status" value="1"/>
</dbReference>
<name>VMA21_CAEEL</name>
<reference key="1">
    <citation type="journal article" date="1998" name="Science">
        <title>Genome sequence of the nematode C. elegans: a platform for investigating biology.</title>
        <authorList>
            <consortium name="The C. elegans sequencing consortium"/>
        </authorList>
    </citation>
    <scope>NUCLEOTIDE SEQUENCE [LARGE SCALE GENOMIC DNA]</scope>
    <source>
        <strain>Bristol N2</strain>
    </source>
</reference>
<accession>A5JYQ9</accession>
<sequence length="102" mass="11354">MTTSSSSEPSTMATLFPNFRDQEVQSAVKNLLTYSLVILIVPLASMFLLKQFFFEGLLGVSANDALTYSAIIAVVLVHVVLGIWLFAATKQEDRKKRENKQD</sequence>
<feature type="chain" id="PRO_0000377570" description="Vacuolar ATPase assembly integral membrane protein VMA21 homolog">
    <location>
        <begin position="1"/>
        <end position="102"/>
    </location>
</feature>
<feature type="topological domain" description="Cytoplasmic" evidence="1">
    <location>
        <begin position="1"/>
        <end position="33"/>
    </location>
</feature>
<feature type="transmembrane region" description="Helical" evidence="1">
    <location>
        <begin position="34"/>
        <end position="54"/>
    </location>
</feature>
<feature type="topological domain" description="Lumenal" evidence="1">
    <location>
        <begin position="55"/>
        <end position="67"/>
    </location>
</feature>
<feature type="transmembrane region" description="Helical" evidence="1">
    <location>
        <begin position="68"/>
        <end position="88"/>
    </location>
</feature>
<feature type="topological domain" description="Cytoplasmic" evidence="1">
    <location>
        <begin position="89"/>
        <end position="102"/>
    </location>
</feature>
<proteinExistence type="inferred from homology"/>
<evidence type="ECO:0000255" key="1">
    <source>
        <dbReference type="HAMAP-Rule" id="MF_03058"/>
    </source>
</evidence>
<evidence type="ECO:0000305" key="2"/>
<evidence type="ECO:0000312" key="3">
    <source>
        <dbReference type="WormBase" id="R07E5.19"/>
    </source>
</evidence>
<organism>
    <name type="scientific">Caenorhabditis elegans</name>
    <dbReference type="NCBI Taxonomy" id="6239"/>
    <lineage>
        <taxon>Eukaryota</taxon>
        <taxon>Metazoa</taxon>
        <taxon>Ecdysozoa</taxon>
        <taxon>Nematoda</taxon>
        <taxon>Chromadorea</taxon>
        <taxon>Rhabditida</taxon>
        <taxon>Rhabditina</taxon>
        <taxon>Rhabditomorpha</taxon>
        <taxon>Rhabditoidea</taxon>
        <taxon>Rhabditidae</taxon>
        <taxon>Peloderinae</taxon>
        <taxon>Caenorhabditis</taxon>
    </lineage>
</organism>
<comment type="function">
    <text evidence="1">Required for the assembly of the V0 complex of the vacuolar ATPase (V-ATPase) in the endoplasmic reticulum.</text>
</comment>
<comment type="subcellular location">
    <subcellularLocation>
        <location evidence="1">Endoplasmic reticulum membrane</location>
        <topology evidence="1">Multi-pass membrane protein</topology>
    </subcellularLocation>
    <subcellularLocation>
        <location evidence="1">Endoplasmic reticulum-Golgi intermediate compartment membrane</location>
        <topology evidence="1">Multi-pass membrane protein</topology>
    </subcellularLocation>
    <subcellularLocation>
        <location evidence="1">Cytoplasmic vesicle</location>
        <location evidence="1">COPII-coated vesicle membrane</location>
        <topology evidence="1">Multi-pass membrane protein</topology>
    </subcellularLocation>
</comment>
<comment type="miscellaneous">
    <text evidence="2">Based on the gene model, may be part of a dicistronic locus.</text>
</comment>
<comment type="similarity">
    <text evidence="1">Belongs to the VMA21 family.</text>
</comment>
<keyword id="KW-0968">Cytoplasmic vesicle</keyword>
<keyword id="KW-0256">Endoplasmic reticulum</keyword>
<keyword id="KW-0472">Membrane</keyword>
<keyword id="KW-1185">Reference proteome</keyword>
<keyword id="KW-0812">Transmembrane</keyword>
<keyword id="KW-1133">Transmembrane helix</keyword>